<protein>
    <recommendedName>
        <fullName evidence="2">Small ribosomal subunit protein uS12</fullName>
    </recommendedName>
    <alternativeName>
        <fullName evidence="4">30S ribosomal protein S12</fullName>
    </alternativeName>
</protein>
<organism>
    <name type="scientific">Pediococcus pentosaceus (strain ATCC 25745 / CCUG 21536 / LMG 10740 / 183-1w)</name>
    <dbReference type="NCBI Taxonomy" id="278197"/>
    <lineage>
        <taxon>Bacteria</taxon>
        <taxon>Bacillati</taxon>
        <taxon>Bacillota</taxon>
        <taxon>Bacilli</taxon>
        <taxon>Lactobacillales</taxon>
        <taxon>Lactobacillaceae</taxon>
        <taxon>Pediococcus</taxon>
    </lineage>
</organism>
<sequence length="137" mass="15177">MPTINQLVRKGRRSQSSKSKAPALNYGYNSMKKSQVNNPAPQKRGVATRVGTMTPKKPNSALRKYARVRLSNLIEVTAYIPGIGHNLQEHSVVLIRGGRVKDLPGVRYHVIRGALDTAGVTDRKQSRSKYGTKKPKK</sequence>
<evidence type="ECO:0000250" key="1"/>
<evidence type="ECO:0000255" key="2">
    <source>
        <dbReference type="HAMAP-Rule" id="MF_00403"/>
    </source>
</evidence>
<evidence type="ECO:0000256" key="3">
    <source>
        <dbReference type="SAM" id="MobiDB-lite"/>
    </source>
</evidence>
<evidence type="ECO:0000305" key="4"/>
<reference key="1">
    <citation type="journal article" date="2006" name="Proc. Natl. Acad. Sci. U.S.A.">
        <title>Comparative genomics of the lactic acid bacteria.</title>
        <authorList>
            <person name="Makarova K.S."/>
            <person name="Slesarev A."/>
            <person name="Wolf Y.I."/>
            <person name="Sorokin A."/>
            <person name="Mirkin B."/>
            <person name="Koonin E.V."/>
            <person name="Pavlov A."/>
            <person name="Pavlova N."/>
            <person name="Karamychev V."/>
            <person name="Polouchine N."/>
            <person name="Shakhova V."/>
            <person name="Grigoriev I."/>
            <person name="Lou Y."/>
            <person name="Rohksar D."/>
            <person name="Lucas S."/>
            <person name="Huang K."/>
            <person name="Goodstein D.M."/>
            <person name="Hawkins T."/>
            <person name="Plengvidhya V."/>
            <person name="Welker D."/>
            <person name="Hughes J."/>
            <person name="Goh Y."/>
            <person name="Benson A."/>
            <person name="Baldwin K."/>
            <person name="Lee J.-H."/>
            <person name="Diaz-Muniz I."/>
            <person name="Dosti B."/>
            <person name="Smeianov V."/>
            <person name="Wechter W."/>
            <person name="Barabote R."/>
            <person name="Lorca G."/>
            <person name="Altermann E."/>
            <person name="Barrangou R."/>
            <person name="Ganesan B."/>
            <person name="Xie Y."/>
            <person name="Rawsthorne H."/>
            <person name="Tamir D."/>
            <person name="Parker C."/>
            <person name="Breidt F."/>
            <person name="Broadbent J.R."/>
            <person name="Hutkins R."/>
            <person name="O'Sullivan D."/>
            <person name="Steele J."/>
            <person name="Unlu G."/>
            <person name="Saier M.H. Jr."/>
            <person name="Klaenhammer T."/>
            <person name="Richardson P."/>
            <person name="Kozyavkin S."/>
            <person name="Weimer B.C."/>
            <person name="Mills D.A."/>
        </authorList>
    </citation>
    <scope>NUCLEOTIDE SEQUENCE [LARGE SCALE GENOMIC DNA]</scope>
    <source>
        <strain>ATCC 25745 / CCUG 21536 / LMG 10740 / 183-1w</strain>
    </source>
</reference>
<keyword id="KW-0488">Methylation</keyword>
<keyword id="KW-0687">Ribonucleoprotein</keyword>
<keyword id="KW-0689">Ribosomal protein</keyword>
<keyword id="KW-0694">RNA-binding</keyword>
<keyword id="KW-0699">rRNA-binding</keyword>
<keyword id="KW-0820">tRNA-binding</keyword>
<gene>
    <name evidence="2" type="primary">rpsL</name>
    <name type="ordered locus">PEPE_1422</name>
</gene>
<name>RS12_PEDPA</name>
<feature type="chain" id="PRO_0000296010" description="Small ribosomal subunit protein uS12">
    <location>
        <begin position="1"/>
        <end position="137"/>
    </location>
</feature>
<feature type="region of interest" description="Disordered" evidence="3">
    <location>
        <begin position="1"/>
        <end position="24"/>
    </location>
</feature>
<feature type="modified residue" description="3-methylthioaspartic acid" evidence="1">
    <location>
        <position position="102"/>
    </location>
</feature>
<comment type="function">
    <text evidence="2">With S4 and S5 plays an important role in translational accuracy.</text>
</comment>
<comment type="function">
    <text evidence="2">Interacts with and stabilizes bases of the 16S rRNA that are involved in tRNA selection in the A site and with the mRNA backbone. Located at the interface of the 30S and 50S subunits, it traverses the body of the 30S subunit contacting proteins on the other side and probably holding the rRNA structure together. The combined cluster of proteins S8, S12 and S17 appears to hold together the shoulder and platform of the 30S subunit.</text>
</comment>
<comment type="subunit">
    <text evidence="2">Part of the 30S ribosomal subunit. Contacts proteins S8 and S17. May interact with IF1 in the 30S initiation complex.</text>
</comment>
<comment type="similarity">
    <text evidence="2">Belongs to the universal ribosomal protein uS12 family.</text>
</comment>
<proteinExistence type="inferred from homology"/>
<dbReference type="EMBL" id="CP000422">
    <property type="protein sequence ID" value="ABJ68460.1"/>
    <property type="molecule type" value="Genomic_DNA"/>
</dbReference>
<dbReference type="RefSeq" id="WP_002832281.1">
    <property type="nucleotide sequence ID" value="NC_008525.1"/>
</dbReference>
<dbReference type="SMR" id="Q03EB2"/>
<dbReference type="STRING" id="278197.PEPE_1422"/>
<dbReference type="GeneID" id="57366429"/>
<dbReference type="KEGG" id="ppe:PEPE_1422"/>
<dbReference type="eggNOG" id="COG0048">
    <property type="taxonomic scope" value="Bacteria"/>
</dbReference>
<dbReference type="HOGENOM" id="CLU_104295_1_2_9"/>
<dbReference type="OrthoDB" id="9802366at2"/>
<dbReference type="Proteomes" id="UP000000773">
    <property type="component" value="Chromosome"/>
</dbReference>
<dbReference type="GO" id="GO:0015935">
    <property type="term" value="C:small ribosomal subunit"/>
    <property type="evidence" value="ECO:0007669"/>
    <property type="project" value="InterPro"/>
</dbReference>
<dbReference type="GO" id="GO:0019843">
    <property type="term" value="F:rRNA binding"/>
    <property type="evidence" value="ECO:0007669"/>
    <property type="project" value="UniProtKB-UniRule"/>
</dbReference>
<dbReference type="GO" id="GO:0003735">
    <property type="term" value="F:structural constituent of ribosome"/>
    <property type="evidence" value="ECO:0007669"/>
    <property type="project" value="InterPro"/>
</dbReference>
<dbReference type="GO" id="GO:0000049">
    <property type="term" value="F:tRNA binding"/>
    <property type="evidence" value="ECO:0007669"/>
    <property type="project" value="UniProtKB-UniRule"/>
</dbReference>
<dbReference type="GO" id="GO:0006412">
    <property type="term" value="P:translation"/>
    <property type="evidence" value="ECO:0007669"/>
    <property type="project" value="UniProtKB-UniRule"/>
</dbReference>
<dbReference type="CDD" id="cd03368">
    <property type="entry name" value="Ribosomal_S12"/>
    <property type="match status" value="1"/>
</dbReference>
<dbReference type="FunFam" id="2.40.50.140:FF:000001">
    <property type="entry name" value="30S ribosomal protein S12"/>
    <property type="match status" value="1"/>
</dbReference>
<dbReference type="Gene3D" id="2.40.50.140">
    <property type="entry name" value="Nucleic acid-binding proteins"/>
    <property type="match status" value="1"/>
</dbReference>
<dbReference type="HAMAP" id="MF_00403_B">
    <property type="entry name" value="Ribosomal_uS12_B"/>
    <property type="match status" value="1"/>
</dbReference>
<dbReference type="InterPro" id="IPR012340">
    <property type="entry name" value="NA-bd_OB-fold"/>
</dbReference>
<dbReference type="InterPro" id="IPR006032">
    <property type="entry name" value="Ribosomal_uS12"/>
</dbReference>
<dbReference type="InterPro" id="IPR005679">
    <property type="entry name" value="Ribosomal_uS12_bac"/>
</dbReference>
<dbReference type="NCBIfam" id="TIGR00981">
    <property type="entry name" value="rpsL_bact"/>
    <property type="match status" value="1"/>
</dbReference>
<dbReference type="PANTHER" id="PTHR11652">
    <property type="entry name" value="30S RIBOSOMAL PROTEIN S12 FAMILY MEMBER"/>
    <property type="match status" value="1"/>
</dbReference>
<dbReference type="Pfam" id="PF00164">
    <property type="entry name" value="Ribosom_S12_S23"/>
    <property type="match status" value="1"/>
</dbReference>
<dbReference type="PIRSF" id="PIRSF002133">
    <property type="entry name" value="Ribosomal_S12/S23"/>
    <property type="match status" value="1"/>
</dbReference>
<dbReference type="PRINTS" id="PR01034">
    <property type="entry name" value="RIBOSOMALS12"/>
</dbReference>
<dbReference type="SUPFAM" id="SSF50249">
    <property type="entry name" value="Nucleic acid-binding proteins"/>
    <property type="match status" value="1"/>
</dbReference>
<dbReference type="PROSITE" id="PS00055">
    <property type="entry name" value="RIBOSOMAL_S12"/>
    <property type="match status" value="1"/>
</dbReference>
<accession>Q03EB2</accession>